<dbReference type="EMBL" id="CP002278">
    <property type="protein sequence ID" value="ADP77334.1"/>
    <property type="molecule type" value="Genomic_DNA"/>
</dbReference>
<dbReference type="EMBL" id="X70784">
    <property type="status" value="NOT_ANNOTATED_CDS"/>
    <property type="molecule type" value="Genomic_DNA"/>
</dbReference>
<dbReference type="SMR" id="P56509"/>
<dbReference type="STRING" id="523846.Mfer_0534"/>
<dbReference type="KEGG" id="mfv:Mfer_0534"/>
<dbReference type="HOGENOM" id="CLU_430009_0_0_2"/>
<dbReference type="OrthoDB" id="43518at2157"/>
<dbReference type="Proteomes" id="UP000002315">
    <property type="component" value="Chromosome"/>
</dbReference>
<dbReference type="GO" id="GO:0005886">
    <property type="term" value="C:plasma membrane"/>
    <property type="evidence" value="ECO:0007669"/>
    <property type="project" value="UniProtKB-SubCell"/>
</dbReference>
<dbReference type="GO" id="GO:0036094">
    <property type="term" value="F:small molecule binding"/>
    <property type="evidence" value="ECO:0007669"/>
    <property type="project" value="InterPro"/>
</dbReference>
<dbReference type="GO" id="GO:0006813">
    <property type="term" value="P:potassium ion transport"/>
    <property type="evidence" value="ECO:0007669"/>
    <property type="project" value="InterPro"/>
</dbReference>
<dbReference type="Gene3D" id="1.10.287.70">
    <property type="match status" value="1"/>
</dbReference>
<dbReference type="Gene3D" id="3.30.1340.20">
    <property type="entry name" value="3H domain"/>
    <property type="match status" value="3"/>
</dbReference>
<dbReference type="Gene3D" id="3.40.50.720">
    <property type="entry name" value="NAD(P)-binding Rossmann-like Domain"/>
    <property type="match status" value="1"/>
</dbReference>
<dbReference type="InterPro" id="IPR035922">
    <property type="entry name" value="3H_dom_sf"/>
</dbReference>
<dbReference type="InterPro" id="IPR004173">
    <property type="entry name" value="3H_domain"/>
</dbReference>
<dbReference type="InterPro" id="IPR013099">
    <property type="entry name" value="K_chnl_dom"/>
</dbReference>
<dbReference type="InterPro" id="IPR036291">
    <property type="entry name" value="NAD(P)-bd_dom_sf"/>
</dbReference>
<dbReference type="InterPro" id="IPR003148">
    <property type="entry name" value="RCK_N"/>
</dbReference>
<dbReference type="InterPro" id="IPR050721">
    <property type="entry name" value="Trk_Ktr_HKT_K-transport"/>
</dbReference>
<dbReference type="PANTHER" id="PTHR43833">
    <property type="entry name" value="POTASSIUM CHANNEL PROTEIN 2-RELATED-RELATED"/>
    <property type="match status" value="1"/>
</dbReference>
<dbReference type="PANTHER" id="PTHR43833:SF9">
    <property type="entry name" value="POTASSIUM CHANNEL PROTEIN YUGO-RELATED"/>
    <property type="match status" value="1"/>
</dbReference>
<dbReference type="Pfam" id="PF02829">
    <property type="entry name" value="3H"/>
    <property type="match status" value="3"/>
</dbReference>
<dbReference type="Pfam" id="PF07885">
    <property type="entry name" value="Ion_trans_2"/>
    <property type="match status" value="1"/>
</dbReference>
<dbReference type="Pfam" id="PF02254">
    <property type="entry name" value="TrkA_N"/>
    <property type="match status" value="1"/>
</dbReference>
<dbReference type="SUPFAM" id="SSF51735">
    <property type="entry name" value="NAD(P)-binding Rossmann-fold domains"/>
    <property type="match status" value="1"/>
</dbReference>
<dbReference type="SUPFAM" id="SSF75500">
    <property type="entry name" value="Putative transcriptional regulator TM1602, C-terminal domain"/>
    <property type="match status" value="3"/>
</dbReference>
<dbReference type="SUPFAM" id="SSF81324">
    <property type="entry name" value="Voltage-gated potassium channels"/>
    <property type="match status" value="1"/>
</dbReference>
<dbReference type="PROSITE" id="PS51201">
    <property type="entry name" value="RCK_N"/>
    <property type="match status" value="1"/>
</dbReference>
<protein>
    <recommendedName>
        <fullName>Uncharacterized protein Mfer_0534</fullName>
    </recommendedName>
    <alternativeName>
        <fullName>ORFD</fullName>
    </alternativeName>
</protein>
<organism>
    <name type="scientific">Methanothermus fervidus (strain ATCC 43054 / DSM 2088 / JCM 10308 / V24 S)</name>
    <dbReference type="NCBI Taxonomy" id="523846"/>
    <lineage>
        <taxon>Archaea</taxon>
        <taxon>Methanobacteriati</taxon>
        <taxon>Methanobacteriota</taxon>
        <taxon>Methanomada group</taxon>
        <taxon>Methanobacteria</taxon>
        <taxon>Methanobacteriales</taxon>
        <taxon>Methanothermaceae</taxon>
        <taxon>Methanothermus</taxon>
    </lineage>
</organism>
<gene>
    <name type="ordered locus">Mfer_0534</name>
</gene>
<accession>P56509</accession>
<accession>E3GYF2</accession>
<keyword id="KW-1003">Cell membrane</keyword>
<keyword id="KW-0472">Membrane</keyword>
<keyword id="KW-1185">Reference proteome</keyword>
<keyword id="KW-0812">Transmembrane</keyword>
<keyword id="KW-1133">Transmembrane helix</keyword>
<evidence type="ECO:0000255" key="1"/>
<evidence type="ECO:0000255" key="2">
    <source>
        <dbReference type="PROSITE-ProRule" id="PRU00543"/>
    </source>
</evidence>
<evidence type="ECO:0000305" key="3"/>
<reference key="1">
    <citation type="journal article" date="2010" name="Stand. Genomic Sci.">
        <title>Complete genome sequence of Methanothermus fervidus type strain (V24S).</title>
        <authorList>
            <person name="Anderson I."/>
            <person name="Djao O.D."/>
            <person name="Misra M."/>
            <person name="Chertkov O."/>
            <person name="Nolan M."/>
            <person name="Lucas S."/>
            <person name="Lapidus A."/>
            <person name="Del Rio T.G."/>
            <person name="Tice H."/>
            <person name="Cheng J.F."/>
            <person name="Tapia R."/>
            <person name="Han C."/>
            <person name="Goodwin L."/>
            <person name="Pitluck S."/>
            <person name="Liolios K."/>
            <person name="Ivanova N."/>
            <person name="Mavromatis K."/>
            <person name="Mikhailova N."/>
            <person name="Pati A."/>
            <person name="Brambilla E."/>
            <person name="Chen A."/>
            <person name="Palaniappan K."/>
            <person name="Land M."/>
            <person name="Hauser L."/>
            <person name="Chang Y.J."/>
            <person name="Jeffries C.D."/>
            <person name="Sikorski J."/>
            <person name="Spring S."/>
            <person name="Rohde M."/>
            <person name="Eichinger K."/>
            <person name="Huber H."/>
            <person name="Wirth R."/>
            <person name="Goker M."/>
            <person name="Detter J.C."/>
            <person name="Woyke T."/>
            <person name="Bristow J."/>
            <person name="Eisen J.A."/>
            <person name="Markowitz V."/>
            <person name="Hugenholtz P."/>
            <person name="Klenk H.P."/>
            <person name="Kyrpides N.C."/>
        </authorList>
    </citation>
    <scope>NUCLEOTIDE SEQUENCE [LARGE SCALE GENOMIC DNA]</scope>
    <source>
        <strain>ATCC 43054 / DSM 2088 / JCM 10308 / V24 S</strain>
    </source>
</reference>
<reference key="2">
    <citation type="journal article" date="1994" name="Mol. Gen. Genet.">
        <title>Cloning, sequencing and transcript analysis of the gene encoding formylmethanofuran: tetrahydromethanopterin formyltransferase from the hyperthermophilic Methanothermus fervidus.</title>
        <authorList>
            <person name="Lehmacher A."/>
        </authorList>
    </citation>
    <scope>NUCLEOTIDE SEQUENCE [GENOMIC DNA] OF 555-636</scope>
    <source>
        <strain>ATCC 43054 / DSM 2088 / JCM 10308 / V24 S</strain>
    </source>
</reference>
<name>Y534_METFV</name>
<feature type="chain" id="PRO_0000066216" description="Uncharacterized protein Mfer_0534">
    <location>
        <begin position="1"/>
        <end position="636"/>
    </location>
</feature>
<feature type="transmembrane region" description="Helical" evidence="1">
    <location>
        <begin position="12"/>
        <end position="32"/>
    </location>
</feature>
<feature type="transmembrane region" description="Helical" evidence="1">
    <location>
        <begin position="34"/>
        <end position="54"/>
    </location>
</feature>
<feature type="transmembrane region" description="Helical" evidence="1">
    <location>
        <begin position="75"/>
        <end position="95"/>
    </location>
</feature>
<feature type="domain" description="RCK N-terminal" evidence="2">
    <location>
        <begin position="112"/>
        <end position="231"/>
    </location>
</feature>
<comment type="subcellular location">
    <subcellularLocation>
        <location evidence="3">Cell membrane</location>
        <topology evidence="3">Multi-pass membrane protein</topology>
    </subcellularLocation>
</comment>
<sequence length="636" mass="72388">MDGFYPTNLKNAVIYAALILILLFVYGIFGSIYIMHLGVIDAIYYTITTVTTTGFGDIRPITPSQKLFTASLELIGAGFLLYIFTLMLSVMFMSFSEYVTGAKLKRKIASMKNHFILCGFGRVGSTAFKELKKRKQKVVIIEKNKDLVETELWSDPNIIAIPGDATKENVLRYAGIERAKCIIIATGSDVDNLFITIEAKELNPKIWIVARASERENISRLKKAGANRIISPEFSGGKDIYFAAMEPLMMKITVKHGMESIKREAEIIFKHNCTLENIMYHLPEFREPLKRKIEVSDLDHIEKFLFQVKKNPRLRESLNKMYESTSGVHSHWISGPSKENLEKVVEDLKKEGILLGVNLDDEKIKEITRKYGMLAEVMVKPEITVVNKHGIDEIRDEAEIILKHGCTIEDIEYYIPGFREPLKRHVGADSIEDIDKFLNTLKKDPKKYDAIDRLYMLSGGGIHSHVISARSLESLNKVEKELKEKGFLIGVNMSLGEIKEMIQKSGTVVDILVQHDVKNLEDKKTVVKYGGRILTSKHYLPGIRYVLTRKLNLKTMEDVKKCEKELEKPRARRTLTALYELSANIHSHTIVTPSAEITKKIEEELKEKGILLGVNFPEEKIWEMVEKEAVEPFCVD</sequence>
<proteinExistence type="predicted"/>